<protein>
    <recommendedName>
        <fullName evidence="1">Adenine deaminase</fullName>
        <shortName evidence="1">Adenase</shortName>
        <shortName evidence="1">Adenine aminase</shortName>
        <ecNumber evidence="1">3.5.4.2</ecNumber>
    </recommendedName>
</protein>
<sequence length="568" mass="64186">MQVELIIKNLNVYNSYFKKFIKGDILINKGKFLHIGKGYEDRLWSENVIDGEGKYIIPGLIDIHMHIESSMTIPREFSKAAIKHGVTTVVADPHEIANVFGIRGIEEFIKFKGNLDIFYGIPSSVPSTSSSLETTGEKITHNEVKRLLEYDNIICLGEVMNFKDLIEDDDSNINKIINISKEKNIPLEGHCPKIQGVDLSLYIYRGVNGDHTQQSVGSLQEKIQNGMFIEMQHKSMTLENIKFLIENNLYEHFALVTDDVMADKLVKGHLDEILKEAVKLGMSIENAIYASTYTPARRMNLLDRGTIAPGKLADFILLDSIEDFNIYEVYKNGEMVFNRDKGLKEEFFEDKSKLDYRFYNSIELNNITKESLEVKVPNKYKNKVNCRTMKVLKNTTFTEEGEVTLNVYNNILQWEKSSCALIAVFERYGKNNNISFGLVEGEIIKEGAIATTWAHDHHNLMVMGRNISDMTIAANEVINSRGGYVVSKNNEVIAKLELPIGGIISDEPIEIIGEKLGEVRSAMRDLGYNHMNEIMSFSTLSLPVSPALKITDKGLIDVKKGSIVSLFK</sequence>
<gene>
    <name evidence="1" type="primary">ade</name>
    <name type="ordered locus">CPF_1476</name>
</gene>
<feature type="chain" id="PRO_0000296720" description="Adenine deaminase">
    <location>
        <begin position="1"/>
        <end position="568"/>
    </location>
</feature>
<keyword id="KW-0378">Hydrolase</keyword>
<keyword id="KW-0464">Manganese</keyword>
<dbReference type="EC" id="3.5.4.2" evidence="1"/>
<dbReference type="EMBL" id="CP000246">
    <property type="protein sequence ID" value="ABG82839.1"/>
    <property type="molecule type" value="Genomic_DNA"/>
</dbReference>
<dbReference type="RefSeq" id="WP_011590725.1">
    <property type="nucleotide sequence ID" value="NC_008261.1"/>
</dbReference>
<dbReference type="SMR" id="Q0TR21"/>
<dbReference type="STRING" id="195103.CPF_1476"/>
<dbReference type="PaxDb" id="195103-CPF_1476"/>
<dbReference type="KEGG" id="cpf:CPF_1476"/>
<dbReference type="eggNOG" id="COG1001">
    <property type="taxonomic scope" value="Bacteria"/>
</dbReference>
<dbReference type="HOGENOM" id="CLU_027935_0_0_9"/>
<dbReference type="Proteomes" id="UP000001823">
    <property type="component" value="Chromosome"/>
</dbReference>
<dbReference type="GO" id="GO:0000034">
    <property type="term" value="F:adenine deaminase activity"/>
    <property type="evidence" value="ECO:0007669"/>
    <property type="project" value="UniProtKB-UniRule"/>
</dbReference>
<dbReference type="GO" id="GO:0006146">
    <property type="term" value="P:adenine catabolic process"/>
    <property type="evidence" value="ECO:0007669"/>
    <property type="project" value="InterPro"/>
</dbReference>
<dbReference type="CDD" id="cd01295">
    <property type="entry name" value="AdeC"/>
    <property type="match status" value="1"/>
</dbReference>
<dbReference type="Gene3D" id="3.20.20.140">
    <property type="entry name" value="Metal-dependent hydrolases"/>
    <property type="match status" value="1"/>
</dbReference>
<dbReference type="Gene3D" id="2.30.40.10">
    <property type="entry name" value="Urease, subunit C, domain 1"/>
    <property type="match status" value="1"/>
</dbReference>
<dbReference type="HAMAP" id="MF_01518">
    <property type="entry name" value="Adenine_deamin"/>
    <property type="match status" value="1"/>
</dbReference>
<dbReference type="InterPro" id="IPR006679">
    <property type="entry name" value="Adenine_deam"/>
</dbReference>
<dbReference type="InterPro" id="IPR026912">
    <property type="entry name" value="Adenine_deam_C"/>
</dbReference>
<dbReference type="InterPro" id="IPR006680">
    <property type="entry name" value="Amidohydro-rel"/>
</dbReference>
<dbReference type="InterPro" id="IPR011059">
    <property type="entry name" value="Metal-dep_hydrolase_composite"/>
</dbReference>
<dbReference type="InterPro" id="IPR032466">
    <property type="entry name" value="Metal_Hydrolase"/>
</dbReference>
<dbReference type="PANTHER" id="PTHR11113:SF2">
    <property type="entry name" value="ADENINE DEAMINASE"/>
    <property type="match status" value="1"/>
</dbReference>
<dbReference type="PANTHER" id="PTHR11113">
    <property type="entry name" value="N-ACETYLGLUCOSAMINE-6-PHOSPHATE DEACETYLASE"/>
    <property type="match status" value="1"/>
</dbReference>
<dbReference type="Pfam" id="PF13382">
    <property type="entry name" value="Adenine_deam_C"/>
    <property type="match status" value="1"/>
</dbReference>
<dbReference type="Pfam" id="PF01979">
    <property type="entry name" value="Amidohydro_1"/>
    <property type="match status" value="1"/>
</dbReference>
<dbReference type="SUPFAM" id="SSF51338">
    <property type="entry name" value="Composite domain of metallo-dependent hydrolases"/>
    <property type="match status" value="1"/>
</dbReference>
<dbReference type="SUPFAM" id="SSF51556">
    <property type="entry name" value="Metallo-dependent hydrolases"/>
    <property type="match status" value="1"/>
</dbReference>
<proteinExistence type="inferred from homology"/>
<accession>Q0TR21</accession>
<organism>
    <name type="scientific">Clostridium perfringens (strain ATCC 13124 / DSM 756 / JCM 1290 / NCIMB 6125 / NCTC 8237 / Type A)</name>
    <dbReference type="NCBI Taxonomy" id="195103"/>
    <lineage>
        <taxon>Bacteria</taxon>
        <taxon>Bacillati</taxon>
        <taxon>Bacillota</taxon>
        <taxon>Clostridia</taxon>
        <taxon>Eubacteriales</taxon>
        <taxon>Clostridiaceae</taxon>
        <taxon>Clostridium</taxon>
    </lineage>
</organism>
<comment type="catalytic activity">
    <reaction evidence="1">
        <text>adenine + H2O + H(+) = hypoxanthine + NH4(+)</text>
        <dbReference type="Rhea" id="RHEA:23688"/>
        <dbReference type="ChEBI" id="CHEBI:15377"/>
        <dbReference type="ChEBI" id="CHEBI:15378"/>
        <dbReference type="ChEBI" id="CHEBI:16708"/>
        <dbReference type="ChEBI" id="CHEBI:17368"/>
        <dbReference type="ChEBI" id="CHEBI:28938"/>
        <dbReference type="EC" id="3.5.4.2"/>
    </reaction>
</comment>
<comment type="cofactor">
    <cofactor evidence="1">
        <name>Mn(2+)</name>
        <dbReference type="ChEBI" id="CHEBI:29035"/>
    </cofactor>
</comment>
<comment type="similarity">
    <text evidence="1">Belongs to the metallo-dependent hydrolases superfamily. Adenine deaminase family.</text>
</comment>
<evidence type="ECO:0000255" key="1">
    <source>
        <dbReference type="HAMAP-Rule" id="MF_01518"/>
    </source>
</evidence>
<reference key="1">
    <citation type="journal article" date="2006" name="Genome Res.">
        <title>Skewed genomic variability in strains of the toxigenic bacterial pathogen, Clostridium perfringens.</title>
        <authorList>
            <person name="Myers G.S.A."/>
            <person name="Rasko D.A."/>
            <person name="Cheung J.K."/>
            <person name="Ravel J."/>
            <person name="Seshadri R."/>
            <person name="DeBoy R.T."/>
            <person name="Ren Q."/>
            <person name="Varga J."/>
            <person name="Awad M.M."/>
            <person name="Brinkac L.M."/>
            <person name="Daugherty S.C."/>
            <person name="Haft D.H."/>
            <person name="Dodson R.J."/>
            <person name="Madupu R."/>
            <person name="Nelson W.C."/>
            <person name="Rosovitz M.J."/>
            <person name="Sullivan S.A."/>
            <person name="Khouri H."/>
            <person name="Dimitrov G.I."/>
            <person name="Watkins K.L."/>
            <person name="Mulligan S."/>
            <person name="Benton J."/>
            <person name="Radune D."/>
            <person name="Fisher D.J."/>
            <person name="Atkins H.S."/>
            <person name="Hiscox T."/>
            <person name="Jost B.H."/>
            <person name="Billington S.J."/>
            <person name="Songer J.G."/>
            <person name="McClane B.A."/>
            <person name="Titball R.W."/>
            <person name="Rood J.I."/>
            <person name="Melville S.B."/>
            <person name="Paulsen I.T."/>
        </authorList>
    </citation>
    <scope>NUCLEOTIDE SEQUENCE [LARGE SCALE GENOMIC DNA]</scope>
    <source>
        <strain>ATCC 13124 / DSM 756 / JCM 1290 / NCIMB 6125 / NCTC 8237 / S 107 / Type A</strain>
    </source>
</reference>
<name>ADEC_CLOP1</name>